<proteinExistence type="inferred from homology"/>
<gene>
    <name type="ordered locus">HI_1520</name>
</gene>
<keyword id="KW-1185">Reference proteome</keyword>
<organism>
    <name type="scientific">Haemophilus influenzae (strain ATCC 51907 / DSM 11121 / KW20 / Rd)</name>
    <dbReference type="NCBI Taxonomy" id="71421"/>
    <lineage>
        <taxon>Bacteria</taxon>
        <taxon>Pseudomonadati</taxon>
        <taxon>Pseudomonadota</taxon>
        <taxon>Gammaproteobacteria</taxon>
        <taxon>Pasteurellales</taxon>
        <taxon>Pasteurellaceae</taxon>
        <taxon>Haemophilus</taxon>
    </lineage>
</organism>
<reference key="1">
    <citation type="journal article" date="1995" name="Science">
        <title>Whole-genome random sequencing and assembly of Haemophilus influenzae Rd.</title>
        <authorList>
            <person name="Fleischmann R.D."/>
            <person name="Adams M.D."/>
            <person name="White O."/>
            <person name="Clayton R.A."/>
            <person name="Kirkness E.F."/>
            <person name="Kerlavage A.R."/>
            <person name="Bult C.J."/>
            <person name="Tomb J.-F."/>
            <person name="Dougherty B.A."/>
            <person name="Merrick J.M."/>
            <person name="McKenney K."/>
            <person name="Sutton G.G."/>
            <person name="FitzHugh W."/>
            <person name="Fields C.A."/>
            <person name="Gocayne J.D."/>
            <person name="Scott J.D."/>
            <person name="Shirley R."/>
            <person name="Liu L.-I."/>
            <person name="Glodek A."/>
            <person name="Kelley J.M."/>
            <person name="Weidman J.F."/>
            <person name="Phillips C.A."/>
            <person name="Spriggs T."/>
            <person name="Hedblom E."/>
            <person name="Cotton M.D."/>
            <person name="Utterback T.R."/>
            <person name="Hanna M.C."/>
            <person name="Nguyen D.T."/>
            <person name="Saudek D.M."/>
            <person name="Brandon R.C."/>
            <person name="Fine L.D."/>
            <person name="Fritchman J.L."/>
            <person name="Fuhrmann J.L."/>
            <person name="Geoghagen N.S.M."/>
            <person name="Gnehm C.L."/>
            <person name="McDonald L.A."/>
            <person name="Small K.V."/>
            <person name="Fraser C.M."/>
            <person name="Smith H.O."/>
            <person name="Venter J.C."/>
        </authorList>
    </citation>
    <scope>NUCLEOTIDE SEQUENCE [LARGE SCALE GENOMIC DNA]</scope>
    <source>
        <strain>ATCC 51907 / DSM 11121 / KW20 / Rd</strain>
    </source>
</reference>
<name>VG47_HAEIN</name>
<feature type="chain" id="PRO_0000077843" description="Mu-like prophage FluMu protein gp47">
    <location>
        <begin position="1"/>
        <end position="355"/>
    </location>
</feature>
<dbReference type="EMBL" id="L42023">
    <property type="protein sequence ID" value="AAC23162.1"/>
    <property type="molecule type" value="Genomic_DNA"/>
</dbReference>
<dbReference type="PIR" id="G64034">
    <property type="entry name" value="G64034"/>
</dbReference>
<dbReference type="RefSeq" id="NP_439669.1">
    <property type="nucleotide sequence ID" value="NC_000907.1"/>
</dbReference>
<dbReference type="SMR" id="P44240"/>
<dbReference type="STRING" id="71421.HI_1520"/>
<dbReference type="DNASU" id="950385"/>
<dbReference type="EnsemblBacteria" id="AAC23162">
    <property type="protein sequence ID" value="AAC23162"/>
    <property type="gene ID" value="HI_1520"/>
</dbReference>
<dbReference type="KEGG" id="hin:HI_1520"/>
<dbReference type="PATRIC" id="fig|71421.8.peg.1591"/>
<dbReference type="eggNOG" id="COG3299">
    <property type="taxonomic scope" value="Bacteria"/>
</dbReference>
<dbReference type="HOGENOM" id="CLU_039609_1_0_6"/>
<dbReference type="OrthoDB" id="7565172at2"/>
<dbReference type="PhylomeDB" id="P44240"/>
<dbReference type="BioCyc" id="HINF71421:G1GJ1-1542-MONOMER"/>
<dbReference type="Proteomes" id="UP000000579">
    <property type="component" value="Chromosome"/>
</dbReference>
<dbReference type="InterPro" id="IPR006949">
    <property type="entry name" value="Baseplate_J-like"/>
</dbReference>
<dbReference type="InterPro" id="IPR052399">
    <property type="entry name" value="Phage_Baseplate_Assmbl_Protein"/>
</dbReference>
<dbReference type="PANTHER" id="PTHR37829">
    <property type="entry name" value="PHAGE-LIKE ELEMENT PBSX PROTEIN XKDT"/>
    <property type="match status" value="1"/>
</dbReference>
<dbReference type="PANTHER" id="PTHR37829:SF3">
    <property type="entry name" value="PROTEIN JAYE-RELATED"/>
    <property type="match status" value="1"/>
</dbReference>
<dbReference type="Pfam" id="PF04865">
    <property type="entry name" value="Baseplate_J"/>
    <property type="match status" value="1"/>
</dbReference>
<comment type="similarity">
    <text evidence="1">Belongs to the Mu gp47/PBSX XkdT family.</text>
</comment>
<sequence>MAFNTPTLSTLIKQGEQQFQYRFPTLKRHNVIGVINRICAALSAGEHMHLDWLARQIIPTTAEEDYLIEYCLYKGIVRKQASTATGLVTVTAANDTTIPAGTVFEDTNTGLTFITTQETVVKAGTADIAVKCETTGVEGNLKAGTSLSLTSAILGLLPTATVKVMSGGADIESLSRLLARLIYRVQYPPAGGASHDYIRWATEVPGVTRAWCFERYYGGGTVGVAFACDEREDILPTPEDIARVRAYIEGHKNEVTGQFEGMPANVELYVFAPQFQAVNFKIRLAPNTPTLRQAVRKSLAAYLANAGVGALLYLSQIRATVSNTAGEVDNSVIFPTADVQLLSDNIAILGDIEWL</sequence>
<evidence type="ECO:0000305" key="1"/>
<accession>P44240</accession>
<protein>
    <recommendedName>
        <fullName>Mu-like prophage FluMu protein gp47</fullName>
    </recommendedName>
</protein>